<gene>
    <name type="primary">nhr-7</name>
    <name type="ORF">F54D1.4</name>
</gene>
<dbReference type="EMBL" id="AF083225">
    <property type="protein sequence ID" value="AAD03683.1"/>
    <property type="molecule type" value="mRNA"/>
</dbReference>
<dbReference type="EMBL" id="Z77132">
    <property type="protein sequence ID" value="CAB00862.3"/>
    <property type="molecule type" value="Genomic_DNA"/>
</dbReference>
<dbReference type="PIR" id="T43349">
    <property type="entry name" value="T43349"/>
</dbReference>
<dbReference type="RefSeq" id="NP_502117.2">
    <property type="nucleotide sequence ID" value="NM_069716.5"/>
</dbReference>
<dbReference type="SMR" id="Q20765"/>
<dbReference type="FunCoup" id="Q20765">
    <property type="interactions" value="391"/>
</dbReference>
<dbReference type="STRING" id="6239.F54D1.4a.1"/>
<dbReference type="PaxDb" id="6239-F54D1.4"/>
<dbReference type="EnsemblMetazoa" id="F54D1.4a.1">
    <property type="protein sequence ID" value="F54D1.4a.1"/>
    <property type="gene ID" value="WBGene00003606"/>
</dbReference>
<dbReference type="EnsemblMetazoa" id="F54D1.4a.2">
    <property type="protein sequence ID" value="F54D1.4a.2"/>
    <property type="gene ID" value="WBGene00003606"/>
</dbReference>
<dbReference type="GeneID" id="178035"/>
<dbReference type="KEGG" id="cel:CELE_F54D1.4"/>
<dbReference type="UCSC" id="F54D1.4">
    <property type="organism name" value="c. elegans"/>
</dbReference>
<dbReference type="AGR" id="WB:WBGene00003606"/>
<dbReference type="CTD" id="178035"/>
<dbReference type="WormBase" id="F54D1.4a">
    <property type="protein sequence ID" value="CE20866"/>
    <property type="gene ID" value="WBGene00003606"/>
    <property type="gene designation" value="nhr-7"/>
</dbReference>
<dbReference type="eggNOG" id="KOG3575">
    <property type="taxonomic scope" value="Eukaryota"/>
</dbReference>
<dbReference type="HOGENOM" id="CLU_038001_0_0_1"/>
<dbReference type="InParanoid" id="Q20765"/>
<dbReference type="OMA" id="EHCRKFS"/>
<dbReference type="OrthoDB" id="5850793at2759"/>
<dbReference type="Reactome" id="R-CEL-200425">
    <property type="pathway name" value="Carnitine shuttle"/>
</dbReference>
<dbReference type="Reactome" id="R-CEL-381340">
    <property type="pathway name" value="Transcriptional regulation of white adipocyte differentiation"/>
</dbReference>
<dbReference type="Reactome" id="R-CEL-383280">
    <property type="pathway name" value="Nuclear Receptor transcription pathway"/>
</dbReference>
<dbReference type="Reactome" id="R-CEL-400206">
    <property type="pathway name" value="Regulation of lipid metabolism by PPARalpha"/>
</dbReference>
<dbReference type="Reactome" id="R-CEL-4090294">
    <property type="pathway name" value="SUMOylation of intracellular receptors"/>
</dbReference>
<dbReference type="Reactome" id="R-CEL-5362517">
    <property type="pathway name" value="Signaling by Retinoic Acid"/>
</dbReference>
<dbReference type="Reactome" id="R-CEL-9616222">
    <property type="pathway name" value="Transcriptional regulation of granulopoiesis"/>
</dbReference>
<dbReference type="Reactome" id="R-CEL-9841922">
    <property type="pathway name" value="MLL4 and MLL3 complexes regulate expression of PPARG target genes in adipogenesis and hepatic steatosis"/>
</dbReference>
<dbReference type="PRO" id="PR:Q20765"/>
<dbReference type="Proteomes" id="UP000001940">
    <property type="component" value="Chromosome IV"/>
</dbReference>
<dbReference type="Bgee" id="WBGene00003606">
    <property type="expression patterns" value="Expressed in larva and 3 other cell types or tissues"/>
</dbReference>
<dbReference type="GO" id="GO:0005634">
    <property type="term" value="C:nucleus"/>
    <property type="evidence" value="ECO:0000318"/>
    <property type="project" value="GO_Central"/>
</dbReference>
<dbReference type="GO" id="GO:0004879">
    <property type="term" value="F:nuclear receptor activity"/>
    <property type="evidence" value="ECO:0000318"/>
    <property type="project" value="GO_Central"/>
</dbReference>
<dbReference type="GO" id="GO:0000978">
    <property type="term" value="F:RNA polymerase II cis-regulatory region sequence-specific DNA binding"/>
    <property type="evidence" value="ECO:0000318"/>
    <property type="project" value="GO_Central"/>
</dbReference>
<dbReference type="GO" id="GO:0008270">
    <property type="term" value="F:zinc ion binding"/>
    <property type="evidence" value="ECO:0007669"/>
    <property type="project" value="UniProtKB-KW"/>
</dbReference>
<dbReference type="GO" id="GO:0030154">
    <property type="term" value="P:cell differentiation"/>
    <property type="evidence" value="ECO:0000318"/>
    <property type="project" value="GO_Central"/>
</dbReference>
<dbReference type="GO" id="GO:0009755">
    <property type="term" value="P:hormone-mediated signaling pathway"/>
    <property type="evidence" value="ECO:0000318"/>
    <property type="project" value="GO_Central"/>
</dbReference>
<dbReference type="GO" id="GO:0030522">
    <property type="term" value="P:intracellular receptor signaling pathway"/>
    <property type="evidence" value="ECO:0000318"/>
    <property type="project" value="GO_Central"/>
</dbReference>
<dbReference type="GO" id="GO:0000122">
    <property type="term" value="P:negative regulation of transcription by RNA polymerase II"/>
    <property type="evidence" value="ECO:0000318"/>
    <property type="project" value="GO_Central"/>
</dbReference>
<dbReference type="GO" id="GO:0045944">
    <property type="term" value="P:positive regulation of transcription by RNA polymerase II"/>
    <property type="evidence" value="ECO:0000318"/>
    <property type="project" value="GO_Central"/>
</dbReference>
<dbReference type="CDD" id="cd06960">
    <property type="entry name" value="NR_DBD_HNF4A"/>
    <property type="match status" value="1"/>
</dbReference>
<dbReference type="FunFam" id="3.30.50.10:FF:000030">
    <property type="entry name" value="Nuclear Hormone Receptor family"/>
    <property type="match status" value="1"/>
</dbReference>
<dbReference type="Gene3D" id="3.30.50.10">
    <property type="entry name" value="Erythroid Transcription Factor GATA-1, subunit A"/>
    <property type="match status" value="1"/>
</dbReference>
<dbReference type="Gene3D" id="1.10.565.10">
    <property type="entry name" value="Retinoid X Receptor"/>
    <property type="match status" value="1"/>
</dbReference>
<dbReference type="InterPro" id="IPR049636">
    <property type="entry name" value="HNF4-like_DBD"/>
</dbReference>
<dbReference type="InterPro" id="IPR035500">
    <property type="entry name" value="NHR-like_dom_sf"/>
</dbReference>
<dbReference type="InterPro" id="IPR000536">
    <property type="entry name" value="Nucl_hrmn_rcpt_lig-bd"/>
</dbReference>
<dbReference type="InterPro" id="IPR052496">
    <property type="entry name" value="Orphan_Nuclear_Rcpt"/>
</dbReference>
<dbReference type="InterPro" id="IPR001628">
    <property type="entry name" value="Znf_hrmn_rcpt"/>
</dbReference>
<dbReference type="InterPro" id="IPR013088">
    <property type="entry name" value="Znf_NHR/GATA"/>
</dbReference>
<dbReference type="PANTHER" id="PTHR47519:SF1">
    <property type="entry name" value="NUCLEAR HORMONE RECEPTOR FAMILY MEMBER NHR-31"/>
    <property type="match status" value="1"/>
</dbReference>
<dbReference type="PANTHER" id="PTHR47519">
    <property type="entry name" value="NUCLEAR HORMONE RECEPTOR FAMILY MEMBER NHR-31-RELATED"/>
    <property type="match status" value="1"/>
</dbReference>
<dbReference type="Pfam" id="PF00105">
    <property type="entry name" value="zf-C4"/>
    <property type="match status" value="1"/>
</dbReference>
<dbReference type="PRINTS" id="PR00047">
    <property type="entry name" value="STROIDFINGER"/>
</dbReference>
<dbReference type="SMART" id="SM00399">
    <property type="entry name" value="ZnF_C4"/>
    <property type="match status" value="1"/>
</dbReference>
<dbReference type="SUPFAM" id="SSF57716">
    <property type="entry name" value="Glucocorticoid receptor-like (DNA-binding domain)"/>
    <property type="match status" value="1"/>
</dbReference>
<dbReference type="SUPFAM" id="SSF48508">
    <property type="entry name" value="Nuclear receptor ligand-binding domain"/>
    <property type="match status" value="1"/>
</dbReference>
<dbReference type="PROSITE" id="PS51843">
    <property type="entry name" value="NR_LBD"/>
    <property type="match status" value="1"/>
</dbReference>
<dbReference type="PROSITE" id="PS00031">
    <property type="entry name" value="NUCLEAR_REC_DBD_1"/>
    <property type="match status" value="1"/>
</dbReference>
<dbReference type="PROSITE" id="PS51030">
    <property type="entry name" value="NUCLEAR_REC_DBD_2"/>
    <property type="match status" value="1"/>
</dbReference>
<keyword id="KW-0238">DNA-binding</keyword>
<keyword id="KW-0479">Metal-binding</keyword>
<keyword id="KW-0539">Nucleus</keyword>
<keyword id="KW-0675">Receptor</keyword>
<keyword id="KW-1185">Reference proteome</keyword>
<keyword id="KW-0804">Transcription</keyword>
<keyword id="KW-0805">Transcription regulation</keyword>
<keyword id="KW-0862">Zinc</keyword>
<keyword id="KW-0863">Zinc-finger</keyword>
<organism>
    <name type="scientific">Caenorhabditis elegans</name>
    <dbReference type="NCBI Taxonomy" id="6239"/>
    <lineage>
        <taxon>Eukaryota</taxon>
        <taxon>Metazoa</taxon>
        <taxon>Ecdysozoa</taxon>
        <taxon>Nematoda</taxon>
        <taxon>Chromadorea</taxon>
        <taxon>Rhabditida</taxon>
        <taxon>Rhabditina</taxon>
        <taxon>Rhabditomorpha</taxon>
        <taxon>Rhabditoidea</taxon>
        <taxon>Rhabditidae</taxon>
        <taxon>Peloderinae</taxon>
        <taxon>Caenorhabditis</taxon>
    </lineage>
</organism>
<name>NHR7_CAEEL</name>
<reference key="1">
    <citation type="journal article" date="1999" name="Genome Res.">
        <title>The nuclear receptor superfamily has undergone extensive proliferation and diversification in nematodes.</title>
        <authorList>
            <person name="Sluder A.E."/>
            <person name="Mathews S.W."/>
            <person name="Hough D."/>
            <person name="Yin V.P."/>
            <person name="Maina C.V."/>
        </authorList>
    </citation>
    <scope>NUCLEOTIDE SEQUENCE [MRNA]</scope>
    <source>
        <strain>Bristol N2</strain>
    </source>
</reference>
<reference key="2">
    <citation type="journal article" date="1998" name="Science">
        <title>Genome sequence of the nematode C. elegans: a platform for investigating biology.</title>
        <authorList>
            <consortium name="The C. elegans sequencing consortium"/>
        </authorList>
    </citation>
    <scope>NUCLEOTIDE SEQUENCE [LARGE SCALE GENOMIC DNA]</scope>
    <source>
        <strain>Bristol N2</strain>
    </source>
</reference>
<feature type="chain" id="PRO_0000053760" description="Nuclear hormone receptor family member nhr-7">
    <location>
        <begin position="1"/>
        <end position="536"/>
    </location>
</feature>
<feature type="domain" description="NR LBD" evidence="2">
    <location>
        <begin position="155"/>
        <end position="378"/>
    </location>
</feature>
<feature type="DNA-binding region" description="Nuclear receptor" evidence="1">
    <location>
        <begin position="6"/>
        <end position="82"/>
    </location>
</feature>
<feature type="zinc finger region" description="NR C4-type" evidence="1">
    <location>
        <begin position="9"/>
        <end position="29"/>
    </location>
</feature>
<feature type="zinc finger region" description="NR C4-type" evidence="1">
    <location>
        <begin position="46"/>
        <end position="70"/>
    </location>
</feature>
<feature type="region of interest" description="Disordered" evidence="3">
    <location>
        <begin position="427"/>
        <end position="465"/>
    </location>
</feature>
<feature type="compositionally biased region" description="Polar residues" evidence="3">
    <location>
        <begin position="439"/>
        <end position="465"/>
    </location>
</feature>
<comment type="function">
    <text>Orphan nuclear receptor.</text>
</comment>
<comment type="subcellular location">
    <subcellularLocation>
        <location evidence="1">Nucleus</location>
    </subcellularLocation>
</comment>
<comment type="similarity">
    <text evidence="4">Belongs to the nuclear hormone receptor family.</text>
</comment>
<protein>
    <recommendedName>
        <fullName>Nuclear hormone receptor family member nhr-7</fullName>
    </recommendedName>
</protein>
<sequence>MQSYTNRICAVCGDTPAKIHYGVLACFGCKGFFRRAVKDGRNKYVCRFEKNCEVTKFERNACRYCRFRKCLLVGMNPDYVRPDREKSKKGKTVLSKKKSVSRSLSYRLADPSDWTSFLSPSSRKQLSEIGKLAETCSTSTNFDGIGNFSLKSLIADRSLARKTGDSEAMDCSNSPRQLNEQFLGIERIVQCVDYIDRFLVMLEEEHCRKFSVEDKSALISDTMIHLLLFESTSRFVAKGAPGLEDLKLSLAQLPICTTHLTQKIADVFETYLRKPPSIIEYSVLKAYIVLSAESTVLSNSLNESLSLARENLSELLFKVIKHSRNKTSISAANSLSTILHFVYESRNLASRIRQSQQPFFVRDSDPKIPFHKILTDIINPEVSDLLLTTANCRKLSTQMGSSLSSVPPVPPPSDTVPLFHFSPPSLSPCQISAPPPPQQQYTDYSQMPSTSSYPANSSPFQSPYRPNSLSSFPKIPLEMTKSIEEFLRPNGMTTDEMNKPLEKNWADGFRLTPVFNKDIVSQFFPELSNINQHHPF</sequence>
<accession>Q20765</accession>
<evidence type="ECO:0000255" key="1">
    <source>
        <dbReference type="PROSITE-ProRule" id="PRU00407"/>
    </source>
</evidence>
<evidence type="ECO:0000255" key="2">
    <source>
        <dbReference type="PROSITE-ProRule" id="PRU01189"/>
    </source>
</evidence>
<evidence type="ECO:0000256" key="3">
    <source>
        <dbReference type="SAM" id="MobiDB-lite"/>
    </source>
</evidence>
<evidence type="ECO:0000305" key="4"/>
<proteinExistence type="evidence at transcript level"/>